<reference key="1">
    <citation type="journal article" date="2007" name="Genome Biol.">
        <title>Characterization and modeling of the Haemophilus influenzae core and supragenomes based on the complete genomic sequences of Rd and 12 clinical nontypeable strains.</title>
        <authorList>
            <person name="Hogg J.S."/>
            <person name="Hu F.Z."/>
            <person name="Janto B."/>
            <person name="Boissy R."/>
            <person name="Hayes J."/>
            <person name="Keefe R."/>
            <person name="Post J.C."/>
            <person name="Ehrlich G.D."/>
        </authorList>
    </citation>
    <scope>NUCLEOTIDE SEQUENCE [LARGE SCALE GENOMIC DNA]</scope>
    <source>
        <strain>PittEE</strain>
    </source>
</reference>
<accession>A5UA85</accession>
<feature type="chain" id="PRO_1000046699" description="DNA mismatch repair protein MutH">
    <location>
        <begin position="1"/>
        <end position="223"/>
    </location>
</feature>
<name>MUTH_HAEIE</name>
<protein>
    <recommendedName>
        <fullName evidence="1">DNA mismatch repair protein MutH</fullName>
    </recommendedName>
    <alternativeName>
        <fullName evidence="1">Methyl-directed mismatch repair protein</fullName>
    </alternativeName>
</protein>
<evidence type="ECO:0000255" key="1">
    <source>
        <dbReference type="HAMAP-Rule" id="MF_00759"/>
    </source>
</evidence>
<proteinExistence type="inferred from homology"/>
<sequence length="223" mass="24872">MIPQTLEQLLSQAQSIAGLTFGELADELHIPVPPDLKRDKGWVGMLLERALGATAGSKAEQDFSHLGVELKTLPINAEGYPLETTFVSLAPLVQNSGVKWENSHVRHKLSCVLWMPIEGSRHIPLRERHIGAPIFWKPTAEQERQLKQDWEELMDLIVLGKLDQITARIGEVMQLRPKGANSKAITKGIGKNGEVIDTLPLGFYLRKEFTAQILNAFLETKPL</sequence>
<comment type="function">
    <text evidence="1">Sequence-specific endonuclease that cleaves unmethylated GATC sequences. It is involved in DNA mismatch repair.</text>
</comment>
<comment type="subcellular location">
    <subcellularLocation>
        <location evidence="1">Cytoplasm</location>
    </subcellularLocation>
</comment>
<comment type="similarity">
    <text evidence="1">Belongs to the MutH family.</text>
</comment>
<dbReference type="EMBL" id="CP000671">
    <property type="protein sequence ID" value="ABQ97686.1"/>
    <property type="molecule type" value="Genomic_DNA"/>
</dbReference>
<dbReference type="SMR" id="A5UA85"/>
<dbReference type="KEGG" id="hip:CGSHiEE_00980"/>
<dbReference type="HOGENOM" id="CLU_086669_0_0_6"/>
<dbReference type="GO" id="GO:0005737">
    <property type="term" value="C:cytoplasm"/>
    <property type="evidence" value="ECO:0007669"/>
    <property type="project" value="UniProtKB-SubCell"/>
</dbReference>
<dbReference type="GO" id="GO:0003677">
    <property type="term" value="F:DNA binding"/>
    <property type="evidence" value="ECO:0007669"/>
    <property type="project" value="InterPro"/>
</dbReference>
<dbReference type="GO" id="GO:0004519">
    <property type="term" value="F:endonuclease activity"/>
    <property type="evidence" value="ECO:0007669"/>
    <property type="project" value="UniProtKB-UniRule"/>
</dbReference>
<dbReference type="GO" id="GO:0006304">
    <property type="term" value="P:DNA modification"/>
    <property type="evidence" value="ECO:0007669"/>
    <property type="project" value="InterPro"/>
</dbReference>
<dbReference type="GO" id="GO:0006298">
    <property type="term" value="P:mismatch repair"/>
    <property type="evidence" value="ECO:0007669"/>
    <property type="project" value="UniProtKB-UniRule"/>
</dbReference>
<dbReference type="CDD" id="cd00583">
    <property type="entry name" value="MutH-like"/>
    <property type="match status" value="1"/>
</dbReference>
<dbReference type="Gene3D" id="3.40.600.10">
    <property type="entry name" value="DNA mismatch repair MutH/Restriction endonuclease, type II"/>
    <property type="match status" value="1"/>
</dbReference>
<dbReference type="HAMAP" id="MF_00759">
    <property type="entry name" value="MutH"/>
    <property type="match status" value="1"/>
</dbReference>
<dbReference type="InterPro" id="IPR004230">
    <property type="entry name" value="DNA_mismatch_repair_MutH"/>
</dbReference>
<dbReference type="InterPro" id="IPR011337">
    <property type="entry name" value="DNA_rep_MutH/RE_typeII_Sau3AI"/>
</dbReference>
<dbReference type="InterPro" id="IPR037057">
    <property type="entry name" value="DNA_rep_MutH/T2_RE_sf"/>
</dbReference>
<dbReference type="InterPro" id="IPR011335">
    <property type="entry name" value="Restrct_endonuc-II-like"/>
</dbReference>
<dbReference type="NCBIfam" id="TIGR02248">
    <property type="entry name" value="mutH_TIGR"/>
    <property type="match status" value="1"/>
</dbReference>
<dbReference type="NCBIfam" id="NF003458">
    <property type="entry name" value="PRK05070.1"/>
    <property type="match status" value="1"/>
</dbReference>
<dbReference type="Pfam" id="PF02976">
    <property type="entry name" value="MutH"/>
    <property type="match status" value="1"/>
</dbReference>
<dbReference type="SMART" id="SM00927">
    <property type="entry name" value="MutH"/>
    <property type="match status" value="1"/>
</dbReference>
<dbReference type="SUPFAM" id="SSF52980">
    <property type="entry name" value="Restriction endonuclease-like"/>
    <property type="match status" value="1"/>
</dbReference>
<organism>
    <name type="scientific">Haemophilus influenzae (strain PittEE)</name>
    <dbReference type="NCBI Taxonomy" id="374930"/>
    <lineage>
        <taxon>Bacteria</taxon>
        <taxon>Pseudomonadati</taxon>
        <taxon>Pseudomonadota</taxon>
        <taxon>Gammaproteobacteria</taxon>
        <taxon>Pasteurellales</taxon>
        <taxon>Pasteurellaceae</taxon>
        <taxon>Haemophilus</taxon>
    </lineage>
</organism>
<gene>
    <name evidence="1" type="primary">mutH</name>
    <name type="ordered locus">CGSHiEE_00980</name>
</gene>
<keyword id="KW-0963">Cytoplasm</keyword>
<keyword id="KW-0227">DNA damage</keyword>
<keyword id="KW-0234">DNA repair</keyword>
<keyword id="KW-0255">Endonuclease</keyword>
<keyword id="KW-0378">Hydrolase</keyword>
<keyword id="KW-0540">Nuclease</keyword>